<evidence type="ECO:0000250" key="1"/>
<evidence type="ECO:0000255" key="2">
    <source>
        <dbReference type="HAMAP-Rule" id="MF_00047"/>
    </source>
</evidence>
<dbReference type="EC" id="6.3.2.4" evidence="2"/>
<dbReference type="EMBL" id="CP000829">
    <property type="protein sequence ID" value="ACI61425.1"/>
    <property type="molecule type" value="Genomic_DNA"/>
</dbReference>
<dbReference type="SMR" id="B5XM63"/>
<dbReference type="KEGG" id="soz:Spy49_1137c"/>
<dbReference type="HOGENOM" id="CLU_039268_0_0_9"/>
<dbReference type="UniPathway" id="UPA00219"/>
<dbReference type="Proteomes" id="UP000001039">
    <property type="component" value="Chromosome"/>
</dbReference>
<dbReference type="GO" id="GO:0005829">
    <property type="term" value="C:cytosol"/>
    <property type="evidence" value="ECO:0007669"/>
    <property type="project" value="TreeGrafter"/>
</dbReference>
<dbReference type="GO" id="GO:0005524">
    <property type="term" value="F:ATP binding"/>
    <property type="evidence" value="ECO:0007669"/>
    <property type="project" value="UniProtKB-KW"/>
</dbReference>
<dbReference type="GO" id="GO:0008716">
    <property type="term" value="F:D-alanine-D-alanine ligase activity"/>
    <property type="evidence" value="ECO:0007669"/>
    <property type="project" value="UniProtKB-UniRule"/>
</dbReference>
<dbReference type="GO" id="GO:0046872">
    <property type="term" value="F:metal ion binding"/>
    <property type="evidence" value="ECO:0007669"/>
    <property type="project" value="UniProtKB-KW"/>
</dbReference>
<dbReference type="GO" id="GO:0071555">
    <property type="term" value="P:cell wall organization"/>
    <property type="evidence" value="ECO:0007669"/>
    <property type="project" value="UniProtKB-KW"/>
</dbReference>
<dbReference type="GO" id="GO:0009252">
    <property type="term" value="P:peptidoglycan biosynthetic process"/>
    <property type="evidence" value="ECO:0007669"/>
    <property type="project" value="UniProtKB-UniRule"/>
</dbReference>
<dbReference type="GO" id="GO:0008360">
    <property type="term" value="P:regulation of cell shape"/>
    <property type="evidence" value="ECO:0007669"/>
    <property type="project" value="UniProtKB-KW"/>
</dbReference>
<dbReference type="FunFam" id="3.30.1490.20:FF:000007">
    <property type="entry name" value="D-alanine--D-alanine ligase"/>
    <property type="match status" value="1"/>
</dbReference>
<dbReference type="FunFam" id="3.30.470.20:FF:000008">
    <property type="entry name" value="D-alanine--D-alanine ligase"/>
    <property type="match status" value="1"/>
</dbReference>
<dbReference type="Gene3D" id="3.40.50.20">
    <property type="match status" value="1"/>
</dbReference>
<dbReference type="Gene3D" id="3.30.1490.20">
    <property type="entry name" value="ATP-grasp fold, A domain"/>
    <property type="match status" value="1"/>
</dbReference>
<dbReference type="Gene3D" id="3.30.470.20">
    <property type="entry name" value="ATP-grasp fold, B domain"/>
    <property type="match status" value="1"/>
</dbReference>
<dbReference type="HAMAP" id="MF_00047">
    <property type="entry name" value="Dala_Dala_lig"/>
    <property type="match status" value="1"/>
</dbReference>
<dbReference type="InterPro" id="IPR011761">
    <property type="entry name" value="ATP-grasp"/>
</dbReference>
<dbReference type="InterPro" id="IPR013815">
    <property type="entry name" value="ATP_grasp_subdomain_1"/>
</dbReference>
<dbReference type="InterPro" id="IPR000291">
    <property type="entry name" value="D-Ala_lig_Van_CS"/>
</dbReference>
<dbReference type="InterPro" id="IPR005905">
    <property type="entry name" value="D_ala_D_ala"/>
</dbReference>
<dbReference type="InterPro" id="IPR011095">
    <property type="entry name" value="Dala_Dala_lig_C"/>
</dbReference>
<dbReference type="InterPro" id="IPR011127">
    <property type="entry name" value="Dala_Dala_lig_N"/>
</dbReference>
<dbReference type="InterPro" id="IPR016185">
    <property type="entry name" value="PreATP-grasp_dom_sf"/>
</dbReference>
<dbReference type="NCBIfam" id="TIGR01205">
    <property type="entry name" value="D_ala_D_alaTIGR"/>
    <property type="match status" value="1"/>
</dbReference>
<dbReference type="NCBIfam" id="NF002528">
    <property type="entry name" value="PRK01966.1-4"/>
    <property type="match status" value="1"/>
</dbReference>
<dbReference type="NCBIfam" id="NF002529">
    <property type="entry name" value="PRK01966.1-5"/>
    <property type="match status" value="1"/>
</dbReference>
<dbReference type="PANTHER" id="PTHR23132">
    <property type="entry name" value="D-ALANINE--D-ALANINE LIGASE"/>
    <property type="match status" value="1"/>
</dbReference>
<dbReference type="PANTHER" id="PTHR23132:SF25">
    <property type="entry name" value="D-ALANINE--D-ALANINE LIGASE A"/>
    <property type="match status" value="1"/>
</dbReference>
<dbReference type="Pfam" id="PF07478">
    <property type="entry name" value="Dala_Dala_lig_C"/>
    <property type="match status" value="1"/>
</dbReference>
<dbReference type="Pfam" id="PF01820">
    <property type="entry name" value="Dala_Dala_lig_N"/>
    <property type="match status" value="1"/>
</dbReference>
<dbReference type="PIRSF" id="PIRSF039102">
    <property type="entry name" value="Ddl/VanB"/>
    <property type="match status" value="1"/>
</dbReference>
<dbReference type="SUPFAM" id="SSF56059">
    <property type="entry name" value="Glutathione synthetase ATP-binding domain-like"/>
    <property type="match status" value="1"/>
</dbReference>
<dbReference type="SUPFAM" id="SSF52440">
    <property type="entry name" value="PreATP-grasp domain"/>
    <property type="match status" value="1"/>
</dbReference>
<dbReference type="PROSITE" id="PS50975">
    <property type="entry name" value="ATP_GRASP"/>
    <property type="match status" value="1"/>
</dbReference>
<dbReference type="PROSITE" id="PS00843">
    <property type="entry name" value="DALA_DALA_LIGASE_1"/>
    <property type="match status" value="1"/>
</dbReference>
<dbReference type="PROSITE" id="PS00844">
    <property type="entry name" value="DALA_DALA_LIGASE_2"/>
    <property type="match status" value="1"/>
</dbReference>
<comment type="function">
    <text evidence="2">Cell wall formation.</text>
</comment>
<comment type="catalytic activity">
    <reaction evidence="2">
        <text>2 D-alanine + ATP = D-alanyl-D-alanine + ADP + phosphate + H(+)</text>
        <dbReference type="Rhea" id="RHEA:11224"/>
        <dbReference type="ChEBI" id="CHEBI:15378"/>
        <dbReference type="ChEBI" id="CHEBI:30616"/>
        <dbReference type="ChEBI" id="CHEBI:43474"/>
        <dbReference type="ChEBI" id="CHEBI:57416"/>
        <dbReference type="ChEBI" id="CHEBI:57822"/>
        <dbReference type="ChEBI" id="CHEBI:456216"/>
        <dbReference type="EC" id="6.3.2.4"/>
    </reaction>
</comment>
<comment type="cofactor">
    <cofactor evidence="1">
        <name>Mg(2+)</name>
        <dbReference type="ChEBI" id="CHEBI:18420"/>
    </cofactor>
    <cofactor evidence="1">
        <name>Mn(2+)</name>
        <dbReference type="ChEBI" id="CHEBI:29035"/>
    </cofactor>
    <text evidence="1">Binds 2 magnesium or manganese ions per subunit.</text>
</comment>
<comment type="pathway">
    <text evidence="2">Cell wall biogenesis; peptidoglycan biosynthesis.</text>
</comment>
<comment type="subcellular location">
    <subcellularLocation>
        <location evidence="2">Cytoplasm</location>
    </subcellularLocation>
</comment>
<comment type="similarity">
    <text evidence="2">Belongs to the D-alanine--D-alanine ligase family.</text>
</comment>
<organism>
    <name type="scientific">Streptococcus pyogenes serotype M49 (strain NZ131)</name>
    <dbReference type="NCBI Taxonomy" id="471876"/>
    <lineage>
        <taxon>Bacteria</taxon>
        <taxon>Bacillati</taxon>
        <taxon>Bacillota</taxon>
        <taxon>Bacilli</taxon>
        <taxon>Lactobacillales</taxon>
        <taxon>Streptococcaceae</taxon>
        <taxon>Streptococcus</taxon>
    </lineage>
</organism>
<gene>
    <name evidence="2" type="primary">ddl</name>
    <name type="ordered locus">Spy49_1137c</name>
</gene>
<accession>B5XM63</accession>
<reference key="1">
    <citation type="journal article" date="2008" name="J. Bacteriol.">
        <title>Genome sequence of a nephritogenic and highly transformable M49 strain of Streptococcus pyogenes.</title>
        <authorList>
            <person name="McShan W.M."/>
            <person name="Ferretti J.J."/>
            <person name="Karasawa T."/>
            <person name="Suvorov A.N."/>
            <person name="Lin S."/>
            <person name="Qin B."/>
            <person name="Jia H."/>
            <person name="Kenton S."/>
            <person name="Najar F."/>
            <person name="Wu H."/>
            <person name="Scott J."/>
            <person name="Roe B.A."/>
            <person name="Savic D.J."/>
        </authorList>
    </citation>
    <scope>NUCLEOTIDE SEQUENCE [LARGE SCALE GENOMIC DNA]</scope>
    <source>
        <strain>NZ131</strain>
    </source>
</reference>
<feature type="chain" id="PRO_1000116640" description="D-alanine--D-alanine ligase">
    <location>
        <begin position="1"/>
        <end position="348"/>
    </location>
</feature>
<feature type="domain" description="ATP-grasp" evidence="2">
    <location>
        <begin position="132"/>
        <end position="334"/>
    </location>
</feature>
<feature type="binding site" evidence="2">
    <location>
        <begin position="162"/>
        <end position="217"/>
    </location>
    <ligand>
        <name>ATP</name>
        <dbReference type="ChEBI" id="CHEBI:30616"/>
    </ligand>
</feature>
<feature type="binding site" evidence="2">
    <location>
        <position position="288"/>
    </location>
    <ligand>
        <name>Mg(2+)</name>
        <dbReference type="ChEBI" id="CHEBI:18420"/>
        <label>1</label>
    </ligand>
</feature>
<feature type="binding site" evidence="2">
    <location>
        <position position="301"/>
    </location>
    <ligand>
        <name>Mg(2+)</name>
        <dbReference type="ChEBI" id="CHEBI:18420"/>
        <label>1</label>
    </ligand>
</feature>
<feature type="binding site" evidence="2">
    <location>
        <position position="301"/>
    </location>
    <ligand>
        <name>Mg(2+)</name>
        <dbReference type="ChEBI" id="CHEBI:18420"/>
        <label>2</label>
    </ligand>
</feature>
<feature type="binding site" evidence="2">
    <location>
        <position position="303"/>
    </location>
    <ligand>
        <name>Mg(2+)</name>
        <dbReference type="ChEBI" id="CHEBI:18420"/>
        <label>2</label>
    </ligand>
</feature>
<proteinExistence type="inferred from homology"/>
<protein>
    <recommendedName>
        <fullName evidence="2">D-alanine--D-alanine ligase</fullName>
        <ecNumber evidence="2">6.3.2.4</ecNumber>
    </recommendedName>
    <alternativeName>
        <fullName evidence="2">D-Ala-D-Ala ligase</fullName>
    </alternativeName>
    <alternativeName>
        <fullName evidence="2">D-alanylalanine synthetase</fullName>
    </alternativeName>
</protein>
<keyword id="KW-0067">ATP-binding</keyword>
<keyword id="KW-0133">Cell shape</keyword>
<keyword id="KW-0961">Cell wall biogenesis/degradation</keyword>
<keyword id="KW-0963">Cytoplasm</keyword>
<keyword id="KW-0436">Ligase</keyword>
<keyword id="KW-0460">Magnesium</keyword>
<keyword id="KW-0464">Manganese</keyword>
<keyword id="KW-0479">Metal-binding</keyword>
<keyword id="KW-0547">Nucleotide-binding</keyword>
<keyword id="KW-0573">Peptidoglycan synthesis</keyword>
<sequence>MSKQTLVLLYGGRSAEREVSVLSAESVMRAVNYDKFLVKTYFITQMGQFIKTQQFSEKPSESERLMTNETIELTQKIKPSDIYEEGAVVFPVLHGPMGEDGSIQGFLEVLRMPYIGTNVMSSSIAMDKITTKRVLESIGIPQVAYTVYIDGQDLEACLVETLARLTFPIFVKPANMGSSVGISKAQTKVELRKAIQLALTYDSRVLIEQGVVAREIEVGLLGNDKVKSTLPGEVIKDVDFYDYQAKYVDNKITMAIPADVDQSIVTEMRSYAEVAFKALGGCGLSRCDFFLTQDGQVYLNELNTMPGFTQWSMYPLLWENMGLAYPDLIEELVTLAQEMFDQRESHLI</sequence>
<name>DDL_STRPZ</name>